<proteinExistence type="evidence at protein level"/>
<organism>
    <name type="scientific">Gallus gallus</name>
    <name type="common">Chicken</name>
    <dbReference type="NCBI Taxonomy" id="9031"/>
    <lineage>
        <taxon>Eukaryota</taxon>
        <taxon>Metazoa</taxon>
        <taxon>Chordata</taxon>
        <taxon>Craniata</taxon>
        <taxon>Vertebrata</taxon>
        <taxon>Euteleostomi</taxon>
        <taxon>Archelosauria</taxon>
        <taxon>Archosauria</taxon>
        <taxon>Dinosauria</taxon>
        <taxon>Saurischia</taxon>
        <taxon>Theropoda</taxon>
        <taxon>Coelurosauria</taxon>
        <taxon>Aves</taxon>
        <taxon>Neognathae</taxon>
        <taxon>Galloanserae</taxon>
        <taxon>Galliformes</taxon>
        <taxon>Phasianidae</taxon>
        <taxon>Phasianinae</taxon>
        <taxon>Gallus</taxon>
    </lineage>
</organism>
<comment type="function">
    <text>Transferrins are iron binding transport proteins which can bind two Fe(3+) ions in association with the binding of an anion, usually bicarbonate. Responsible for the transport of iron from sites of absorption and heme degradation to those of storage and utilization. There are two forms of hen transferrin, ovotransferrin, found in the ovoducts and, serum transferrin, secreted by the liver. Serum transferrin may also have a role in stimulating cell proliferation and is regulated by iron levels. Ovotransferrin has a bacteriostatic function and, is not controlled by iron levels.</text>
</comment>
<comment type="subunit">
    <text evidence="1">Monomer.</text>
</comment>
<comment type="subcellular location">
    <subcellularLocation>
        <location>Secreted</location>
    </subcellularLocation>
</comment>
<comment type="tissue specificity">
    <text evidence="3">Expressed in the magnum of the oviduct (at protein level).</text>
</comment>
<comment type="induction">
    <text evidence="3">Up-regulated by dietary stress. Increased expression at day 14 in the magnum of the oviduct in the corticosterone-fed laying hens (at protein level).</text>
</comment>
<comment type="PTM">
    <text>Different forms of hen transferrin are distinguished by their carbohydrate composition. Ovotransferrin and embryo serum transferrin but not adult serum transferrin, have bisecting N-acetylglucosamine. Transferrin secreted by embryo hepatocytes in primary culture is marked by the presence of (alpha1-6) fucosylation of the core N-acetylglucosamine. Serum transferrins also differ in the number of attached neuraminic acid residues. In both embryo forms, sialylation occurs on the Man (alpha 1-3)-linked antennae.</text>
</comment>
<comment type="allergen">
    <text>Causes an allergic reaction in human.</text>
</comment>
<comment type="similarity">
    <text evidence="2">Belongs to the transferrin family.</text>
</comment>
<dbReference type="EMBL" id="X02009">
    <property type="protein sequence ID" value="CAA26040.1"/>
    <property type="molecule type" value="mRNA"/>
</dbReference>
<dbReference type="EMBL" id="Y00407">
    <property type="protein sequence ID" value="CAA68468.1"/>
    <property type="molecule type" value="Genomic_DNA"/>
</dbReference>
<dbReference type="PIR" id="A26845">
    <property type="entry name" value="TFCHE"/>
</dbReference>
<dbReference type="RefSeq" id="NP_990635.1">
    <property type="nucleotide sequence ID" value="NM_205304.1"/>
</dbReference>
<dbReference type="PDB" id="1AIV">
    <property type="method" value="X-ray"/>
    <property type="resolution" value="3.00 A"/>
    <property type="chains" value="A=20-705"/>
</dbReference>
<dbReference type="PDB" id="1D9K">
    <property type="method" value="X-ray"/>
    <property type="resolution" value="3.20 A"/>
    <property type="chains" value="P/Q=153-165"/>
</dbReference>
<dbReference type="PDB" id="1IEJ">
    <property type="method" value="X-ray"/>
    <property type="resolution" value="1.65 A"/>
    <property type="chains" value="A=20-351"/>
</dbReference>
<dbReference type="PDB" id="1IQ7">
    <property type="method" value="X-ray"/>
    <property type="resolution" value="2.30 A"/>
    <property type="chains" value="A=361-705"/>
</dbReference>
<dbReference type="PDB" id="1JL4">
    <property type="method" value="X-ray"/>
    <property type="resolution" value="4.30 A"/>
    <property type="chains" value="C=153-165"/>
</dbReference>
<dbReference type="PDB" id="1N04">
    <property type="method" value="X-ray"/>
    <property type="resolution" value="2.80 A"/>
    <property type="chains" value="A=20-705"/>
</dbReference>
<dbReference type="PDB" id="1NFT">
    <property type="method" value="X-ray"/>
    <property type="resolution" value="2.10 A"/>
    <property type="chains" value="A=23-351"/>
</dbReference>
<dbReference type="PDB" id="1NNT">
    <property type="method" value="X-ray"/>
    <property type="resolution" value="2.30 A"/>
    <property type="chains" value="A=24-351"/>
</dbReference>
<dbReference type="PDB" id="1OVT">
    <property type="method" value="X-ray"/>
    <property type="resolution" value="2.40 A"/>
    <property type="chains" value="A=20-705"/>
</dbReference>
<dbReference type="PDB" id="1RYX">
    <property type="method" value="X-ray"/>
    <property type="resolution" value="3.50 A"/>
    <property type="chains" value="A=20-705"/>
</dbReference>
<dbReference type="PDB" id="1TFA">
    <property type="method" value="X-ray"/>
    <property type="resolution" value="1.90 A"/>
    <property type="chains" value="A=23-351"/>
</dbReference>
<dbReference type="PDB" id="2D3I">
    <property type="method" value="X-ray"/>
    <property type="resolution" value="2.15 A"/>
    <property type="chains" value="A=20-705"/>
</dbReference>
<dbReference type="PDB" id="8FEI">
    <property type="method" value="EM"/>
    <property type="resolution" value="3.00 A"/>
    <property type="chains" value="A=1-705"/>
</dbReference>
<dbReference type="PDB" id="8X3H">
    <property type="method" value="X-ray"/>
    <property type="resolution" value="0.93 A"/>
    <property type="chains" value="A=20-351"/>
</dbReference>
<dbReference type="PDBsum" id="1AIV"/>
<dbReference type="PDBsum" id="1D9K"/>
<dbReference type="PDBsum" id="1IEJ"/>
<dbReference type="PDBsum" id="1IQ7"/>
<dbReference type="PDBsum" id="1JL4"/>
<dbReference type="PDBsum" id="1N04"/>
<dbReference type="PDBsum" id="1NFT"/>
<dbReference type="PDBsum" id="1NNT"/>
<dbReference type="PDBsum" id="1OVT"/>
<dbReference type="PDBsum" id="1RYX"/>
<dbReference type="PDBsum" id="1TFA"/>
<dbReference type="PDBsum" id="2D3I"/>
<dbReference type="PDBsum" id="8FEI"/>
<dbReference type="PDBsum" id="8X3H"/>
<dbReference type="EMDB" id="EMD-29028"/>
<dbReference type="SASBDB" id="P02789"/>
<dbReference type="SMR" id="P02789"/>
<dbReference type="BioGRID" id="676501">
    <property type="interactions" value="1"/>
</dbReference>
<dbReference type="FunCoup" id="P02789">
    <property type="interactions" value="413"/>
</dbReference>
<dbReference type="IntAct" id="P02789">
    <property type="interactions" value="2"/>
</dbReference>
<dbReference type="MINT" id="P02789"/>
<dbReference type="STRING" id="9031.ENSGALP00000010405"/>
<dbReference type="Allergome" id="3293">
    <property type="allergen name" value="Gal d 3.0101"/>
</dbReference>
<dbReference type="Allergome" id="361">
    <property type="allergen name" value="Gal d 3"/>
</dbReference>
<dbReference type="MEROPS" id="S60.970"/>
<dbReference type="GlyConnect" id="482">
    <property type="glycosylation" value="7 N-Linked glycans"/>
</dbReference>
<dbReference type="GlyGen" id="P02789">
    <property type="glycosylation" value="2 sites, 14 N-linked glycans (1 site)"/>
</dbReference>
<dbReference type="iPTMnet" id="P02789"/>
<dbReference type="PaxDb" id="9031-ENSGALP00000010405"/>
<dbReference type="GeneID" id="396241"/>
<dbReference type="KEGG" id="gga:396241"/>
<dbReference type="CTD" id="7018"/>
<dbReference type="VEuPathDB" id="HostDB:geneid_396241"/>
<dbReference type="eggNOG" id="ENOG502QT0C">
    <property type="taxonomic scope" value="Eukaryota"/>
</dbReference>
<dbReference type="InParanoid" id="P02789"/>
<dbReference type="OrthoDB" id="9981115at2759"/>
<dbReference type="PhylomeDB" id="P02789"/>
<dbReference type="EvolutionaryTrace" id="P02789"/>
<dbReference type="PRO" id="PR:P02789"/>
<dbReference type="Proteomes" id="UP000000539">
    <property type="component" value="Unassembled WGS sequence"/>
</dbReference>
<dbReference type="GO" id="GO:0005769">
    <property type="term" value="C:early endosome"/>
    <property type="evidence" value="ECO:0000318"/>
    <property type="project" value="GO_Central"/>
</dbReference>
<dbReference type="GO" id="GO:0005615">
    <property type="term" value="C:extracellular space"/>
    <property type="evidence" value="ECO:0000314"/>
    <property type="project" value="AgBase"/>
</dbReference>
<dbReference type="GO" id="GO:1990377">
    <property type="term" value="C:organomineral extracellular matrix"/>
    <property type="evidence" value="ECO:0000314"/>
    <property type="project" value="AgBase"/>
</dbReference>
<dbReference type="GO" id="GO:0005886">
    <property type="term" value="C:plasma membrane"/>
    <property type="evidence" value="ECO:0000318"/>
    <property type="project" value="GO_Central"/>
</dbReference>
<dbReference type="GO" id="GO:0055037">
    <property type="term" value="C:recycling endosome"/>
    <property type="evidence" value="ECO:0000318"/>
    <property type="project" value="GO_Central"/>
</dbReference>
<dbReference type="GO" id="GO:0008199">
    <property type="term" value="F:ferric iron binding"/>
    <property type="evidence" value="ECO:0000314"/>
    <property type="project" value="AgBase"/>
</dbReference>
<dbReference type="GO" id="GO:0005506">
    <property type="term" value="F:iron ion binding"/>
    <property type="evidence" value="ECO:0000314"/>
    <property type="project" value="AgBase"/>
</dbReference>
<dbReference type="GO" id="GO:0006953">
    <property type="term" value="P:acute-phase response"/>
    <property type="evidence" value="ECO:0000270"/>
    <property type="project" value="AgBase"/>
</dbReference>
<dbReference type="GO" id="GO:0019731">
    <property type="term" value="P:antibacterial humoral response"/>
    <property type="evidence" value="ECO:0000318"/>
    <property type="project" value="GO_Central"/>
</dbReference>
<dbReference type="GO" id="GO:0019730">
    <property type="term" value="P:antimicrobial humoral response"/>
    <property type="evidence" value="ECO:0000304"/>
    <property type="project" value="AgBase"/>
</dbReference>
<dbReference type="GO" id="GO:0006879">
    <property type="term" value="P:intracellular iron ion homeostasis"/>
    <property type="evidence" value="ECO:0000304"/>
    <property type="project" value="GO_Central"/>
</dbReference>
<dbReference type="GO" id="GO:0034755">
    <property type="term" value="P:iron ion transmembrane transport"/>
    <property type="evidence" value="ECO:0000304"/>
    <property type="project" value="AgBase"/>
</dbReference>
<dbReference type="GO" id="GO:0006826">
    <property type="term" value="P:iron ion transport"/>
    <property type="evidence" value="ECO:0000318"/>
    <property type="project" value="GO_Central"/>
</dbReference>
<dbReference type="GO" id="GO:0032496">
    <property type="term" value="P:response to lipopolysaccharide"/>
    <property type="evidence" value="ECO:0000270"/>
    <property type="project" value="AgBase"/>
</dbReference>
<dbReference type="GO" id="GO:0009410">
    <property type="term" value="P:response to xenobiotic stimulus"/>
    <property type="evidence" value="ECO:0000315"/>
    <property type="project" value="AgBase"/>
</dbReference>
<dbReference type="CDD" id="cd13617">
    <property type="entry name" value="PBP2_transferrin_C"/>
    <property type="match status" value="1"/>
</dbReference>
<dbReference type="CDD" id="cd13618">
    <property type="entry name" value="PBP2_transferrin_N"/>
    <property type="match status" value="1"/>
</dbReference>
<dbReference type="FunFam" id="3.40.190.10:FF:000095">
    <property type="entry name" value="Lactotransferrin"/>
    <property type="match status" value="1"/>
</dbReference>
<dbReference type="FunFam" id="3.40.190.10:FF:000366">
    <property type="entry name" value="Ovotransferrin"/>
    <property type="match status" value="1"/>
</dbReference>
<dbReference type="Gene3D" id="3.40.190.10">
    <property type="entry name" value="Periplasmic binding protein-like II"/>
    <property type="match status" value="4"/>
</dbReference>
<dbReference type="InterPro" id="IPR016357">
    <property type="entry name" value="Transferrin"/>
</dbReference>
<dbReference type="InterPro" id="IPR001156">
    <property type="entry name" value="Transferrin-like_dom"/>
</dbReference>
<dbReference type="InterPro" id="IPR018195">
    <property type="entry name" value="Transferrin_Fe_BS"/>
</dbReference>
<dbReference type="PANTHER" id="PTHR11485:SF31">
    <property type="entry name" value="SEROTRANSFERRIN"/>
    <property type="match status" value="1"/>
</dbReference>
<dbReference type="PANTHER" id="PTHR11485">
    <property type="entry name" value="TRANSFERRIN"/>
    <property type="match status" value="1"/>
</dbReference>
<dbReference type="Pfam" id="PF00405">
    <property type="entry name" value="Transferrin"/>
    <property type="match status" value="2"/>
</dbReference>
<dbReference type="PIRSF" id="PIRSF002549">
    <property type="entry name" value="Transferrin"/>
    <property type="match status" value="1"/>
</dbReference>
<dbReference type="PRINTS" id="PR00422">
    <property type="entry name" value="TRANSFERRIN"/>
</dbReference>
<dbReference type="SMART" id="SM00094">
    <property type="entry name" value="TR_FER"/>
    <property type="match status" value="2"/>
</dbReference>
<dbReference type="SUPFAM" id="SSF53850">
    <property type="entry name" value="Periplasmic binding protein-like II"/>
    <property type="match status" value="2"/>
</dbReference>
<dbReference type="PROSITE" id="PS00205">
    <property type="entry name" value="TRANSFERRIN_LIKE_1"/>
    <property type="match status" value="2"/>
</dbReference>
<dbReference type="PROSITE" id="PS00206">
    <property type="entry name" value="TRANSFERRIN_LIKE_2"/>
    <property type="match status" value="2"/>
</dbReference>
<dbReference type="PROSITE" id="PS00207">
    <property type="entry name" value="TRANSFERRIN_LIKE_3"/>
    <property type="match status" value="2"/>
</dbReference>
<dbReference type="PROSITE" id="PS51408">
    <property type="entry name" value="TRANSFERRIN_LIKE_4"/>
    <property type="match status" value="2"/>
</dbReference>
<evidence type="ECO:0000250" key="1">
    <source>
        <dbReference type="UniProtKB" id="P02787"/>
    </source>
</evidence>
<evidence type="ECO:0000255" key="2">
    <source>
        <dbReference type="PROSITE-ProRule" id="PRU00741"/>
    </source>
</evidence>
<evidence type="ECO:0000269" key="3">
    <source>
    </source>
</evidence>
<evidence type="ECO:0000269" key="4">
    <source>
    </source>
</evidence>
<evidence type="ECO:0000269" key="5">
    <source>
    </source>
</evidence>
<evidence type="ECO:0000269" key="6">
    <source>
    </source>
</evidence>
<evidence type="ECO:0000303" key="7">
    <source>
    </source>
</evidence>
<evidence type="ECO:0000305" key="8"/>
<evidence type="ECO:0007829" key="9">
    <source>
        <dbReference type="PDB" id="1AIV"/>
    </source>
</evidence>
<evidence type="ECO:0007829" key="10">
    <source>
        <dbReference type="PDB" id="1IEJ"/>
    </source>
</evidence>
<evidence type="ECO:0007829" key="11">
    <source>
        <dbReference type="PDB" id="1IQ7"/>
    </source>
</evidence>
<evidence type="ECO:0007829" key="12">
    <source>
        <dbReference type="PDB" id="1N04"/>
    </source>
</evidence>
<evidence type="ECO:0007829" key="13">
    <source>
        <dbReference type="PDB" id="1NFT"/>
    </source>
</evidence>
<evidence type="ECO:0007829" key="14">
    <source>
        <dbReference type="PDB" id="1OVT"/>
    </source>
</evidence>
<evidence type="ECO:0007829" key="15">
    <source>
        <dbReference type="PDB" id="1RYX"/>
    </source>
</evidence>
<evidence type="ECO:0007829" key="16">
    <source>
        <dbReference type="PDB" id="2D3I"/>
    </source>
</evidence>
<evidence type="ECO:0007829" key="17">
    <source>
        <dbReference type="PDB" id="8X3H"/>
    </source>
</evidence>
<feature type="signal peptide" evidence="5">
    <location>
        <begin position="1"/>
        <end position="19"/>
    </location>
</feature>
<feature type="chain" id="PRO_0000035719" description="Ovotransferrin">
    <location>
        <begin position="20"/>
        <end position="705"/>
    </location>
</feature>
<feature type="domain" description="Transferrin-like 1" evidence="2">
    <location>
        <begin position="26"/>
        <end position="352"/>
    </location>
</feature>
<feature type="domain" description="Transferrin-like 2" evidence="2">
    <location>
        <begin position="364"/>
        <end position="689"/>
    </location>
</feature>
<feature type="region of interest" description="Connecting region">
    <location>
        <begin position="352"/>
        <end position="360"/>
    </location>
</feature>
<feature type="binding site">
    <location>
        <position position="79"/>
    </location>
    <ligand>
        <name>Fe(3+)</name>
        <dbReference type="ChEBI" id="CHEBI:29034"/>
        <label>1</label>
    </ligand>
</feature>
<feature type="binding site">
    <location>
        <position position="111"/>
    </location>
    <ligand>
        <name>Fe(3+)</name>
        <dbReference type="ChEBI" id="CHEBI:29034"/>
        <label>1</label>
    </ligand>
</feature>
<feature type="binding site">
    <location>
        <position position="136"/>
    </location>
    <ligand>
        <name>hydrogencarbonate</name>
        <dbReference type="ChEBI" id="CHEBI:17544"/>
        <label>1</label>
    </ligand>
</feature>
<feature type="binding site">
    <location>
        <position position="140"/>
    </location>
    <ligand>
        <name>hydrogencarbonate</name>
        <dbReference type="ChEBI" id="CHEBI:17544"/>
        <label>1</label>
    </ligand>
</feature>
<feature type="binding site">
    <location>
        <position position="142"/>
    </location>
    <ligand>
        <name>hydrogencarbonate</name>
        <dbReference type="ChEBI" id="CHEBI:17544"/>
        <label>1</label>
    </ligand>
</feature>
<feature type="binding site">
    <location>
        <position position="143"/>
    </location>
    <ligand>
        <name>hydrogencarbonate</name>
        <dbReference type="ChEBI" id="CHEBI:17544"/>
        <label>1</label>
    </ligand>
</feature>
<feature type="binding site">
    <location>
        <position position="210"/>
    </location>
    <ligand>
        <name>Fe(3+)</name>
        <dbReference type="ChEBI" id="CHEBI:29034"/>
        <label>1</label>
    </ligand>
</feature>
<feature type="binding site">
    <location>
        <position position="269"/>
    </location>
    <ligand>
        <name>Fe(3+)</name>
        <dbReference type="ChEBI" id="CHEBI:29034"/>
        <label>1</label>
    </ligand>
</feature>
<feature type="binding site">
    <location>
        <position position="414"/>
    </location>
    <ligand>
        <name>Fe(3+)</name>
        <dbReference type="ChEBI" id="CHEBI:29034"/>
        <label>2</label>
    </ligand>
</feature>
<feature type="binding site">
    <location>
        <position position="450"/>
    </location>
    <ligand>
        <name>Fe(3+)</name>
        <dbReference type="ChEBI" id="CHEBI:29034"/>
        <label>2</label>
    </ligand>
</feature>
<feature type="binding site">
    <location>
        <position position="475"/>
    </location>
    <ligand>
        <name>hydrogencarbonate</name>
        <dbReference type="ChEBI" id="CHEBI:17544"/>
        <label>2</label>
    </ligand>
</feature>
<feature type="binding site">
    <location>
        <position position="479"/>
    </location>
    <ligand>
        <name>hydrogencarbonate</name>
        <dbReference type="ChEBI" id="CHEBI:17544"/>
        <label>2</label>
    </ligand>
</feature>
<feature type="binding site">
    <location>
        <position position="481"/>
    </location>
    <ligand>
        <name>hydrogencarbonate</name>
        <dbReference type="ChEBI" id="CHEBI:17544"/>
        <label>2</label>
    </ligand>
</feature>
<feature type="binding site">
    <location>
        <position position="482"/>
    </location>
    <ligand>
        <name>hydrogencarbonate</name>
        <dbReference type="ChEBI" id="CHEBI:17544"/>
        <label>2</label>
    </ligand>
</feature>
<feature type="binding site">
    <location>
        <position position="543"/>
    </location>
    <ligand>
        <name>Fe(3+)</name>
        <dbReference type="ChEBI" id="CHEBI:29034"/>
        <label>2</label>
    </ligand>
</feature>
<feature type="binding site">
    <location>
        <position position="611"/>
    </location>
    <ligand>
        <name>Fe(3+)</name>
        <dbReference type="ChEBI" id="CHEBI:29034"/>
        <label>2</label>
    </ligand>
</feature>
<feature type="glycosylation site" description="N-linked (GlcNAc...) asparagine" evidence="6">
    <location>
        <position position="492"/>
    </location>
</feature>
<feature type="disulfide bond" evidence="2 4 6">
    <location>
        <begin position="29"/>
        <end position="64"/>
    </location>
</feature>
<feature type="disulfide bond" evidence="2 4">
    <location>
        <begin position="39"/>
        <end position="55"/>
    </location>
</feature>
<feature type="disulfide bond" evidence="2 4 6">
    <location>
        <begin position="134"/>
        <end position="216"/>
    </location>
</feature>
<feature type="disulfide bond" evidence="2 4 6">
    <location>
        <begin position="179"/>
        <end position="193"/>
    </location>
</feature>
<feature type="disulfide bond" evidence="2 4 6">
    <location>
        <begin position="190"/>
        <end position="201"/>
    </location>
</feature>
<feature type="disulfide bond" evidence="2 4 6">
    <location>
        <begin position="247"/>
        <end position="261"/>
    </location>
</feature>
<feature type="disulfide bond" evidence="2 4 6">
    <location>
        <begin position="367"/>
        <end position="399"/>
    </location>
</feature>
<feature type="disulfide bond" evidence="2 4">
    <location>
        <begin position="377"/>
        <end position="390"/>
    </location>
</feature>
<feature type="disulfide bond" evidence="2 4">
    <location>
        <begin position="424"/>
        <end position="699"/>
    </location>
</feature>
<feature type="disulfide bond" evidence="2 4 6">
    <location>
        <begin position="440"/>
        <end position="662"/>
    </location>
</feature>
<feature type="disulfide bond" evidence="2 4 6">
    <location>
        <begin position="473"/>
        <end position="549"/>
    </location>
</feature>
<feature type="disulfide bond" evidence="2 4 6">
    <location>
        <begin position="497"/>
        <end position="690"/>
    </location>
</feature>
<feature type="disulfide bond" evidence="2 4">
    <location>
        <begin position="507"/>
        <end position="521"/>
    </location>
</feature>
<feature type="disulfide bond" evidence="2 4">
    <location>
        <begin position="518"/>
        <end position="532"/>
    </location>
</feature>
<feature type="disulfide bond" evidence="2 4">
    <location>
        <begin position="589"/>
        <end position="603"/>
    </location>
</feature>
<feature type="sequence variant">
    <original>A</original>
    <variation>V</variation>
    <location>
        <position position="83"/>
    </location>
</feature>
<feature type="sequence variant">
    <original>V</original>
    <variation>I</variation>
    <location>
        <position position="100"/>
    </location>
</feature>
<feature type="sequence variant">
    <original>R</original>
    <variation>W</variation>
    <location>
        <position position="154"/>
    </location>
</feature>
<feature type="sequence variant">
    <original>QK</original>
    <variation>LN</variation>
    <location>
        <begin position="239"/>
        <end position="240"/>
    </location>
</feature>
<feature type="sequence variant">
    <original>S</original>
    <variation>N</variation>
    <location>
        <position position="686"/>
    </location>
</feature>
<feature type="sequence conflict" description="In Ref. 1; CAA26040." evidence="8" ref="1">
    <original>T</original>
    <variation>N</variation>
    <location>
        <position position="132"/>
    </location>
</feature>
<feature type="sequence conflict" description="In Ref. 1; CAA26040." evidence="8" ref="1">
    <original>L</original>
    <variation>F</variation>
    <location>
        <position position="317"/>
    </location>
</feature>
<feature type="strand" evidence="17">
    <location>
        <begin position="24"/>
        <end position="32"/>
    </location>
</feature>
<feature type="helix" evidence="17">
    <location>
        <begin position="33"/>
        <end position="46"/>
    </location>
</feature>
<feature type="strand" evidence="17">
    <location>
        <begin position="49"/>
        <end position="57"/>
    </location>
</feature>
<feature type="helix" evidence="17">
    <location>
        <begin position="61"/>
        <end position="69"/>
    </location>
</feature>
<feature type="turn" evidence="9">
    <location>
        <begin position="70"/>
        <end position="72"/>
    </location>
</feature>
<feature type="strand" evidence="17">
    <location>
        <begin position="75"/>
        <end position="78"/>
    </location>
</feature>
<feature type="helix" evidence="17">
    <location>
        <begin position="80"/>
        <end position="87"/>
    </location>
</feature>
<feature type="turn" evidence="17">
    <location>
        <begin position="89"/>
        <end position="91"/>
    </location>
</feature>
<feature type="strand" evidence="17">
    <location>
        <begin position="94"/>
        <end position="103"/>
    </location>
</feature>
<feature type="strand" evidence="17">
    <location>
        <begin position="106"/>
        <end position="118"/>
    </location>
</feature>
<feature type="helix" evidence="17">
    <location>
        <begin position="125"/>
        <end position="127"/>
    </location>
</feature>
<feature type="strand" evidence="9">
    <location>
        <begin position="129"/>
        <end position="131"/>
    </location>
</feature>
<feature type="strand" evidence="17">
    <location>
        <begin position="132"/>
        <end position="136"/>
    </location>
</feature>
<feature type="turn" evidence="17">
    <location>
        <begin position="141"/>
        <end position="144"/>
    </location>
</feature>
<feature type="helix" evidence="17">
    <location>
        <begin position="145"/>
        <end position="153"/>
    </location>
</feature>
<feature type="strand" evidence="15">
    <location>
        <begin position="155"/>
        <end position="157"/>
    </location>
</feature>
<feature type="helix" evidence="17">
    <location>
        <begin position="162"/>
        <end position="164"/>
    </location>
</feature>
<feature type="helix" evidence="17">
    <location>
        <begin position="167"/>
        <end position="174"/>
    </location>
</feature>
<feature type="strand" evidence="17">
    <location>
        <begin position="175"/>
        <end position="179"/>
    </location>
</feature>
<feature type="helix" evidence="17">
    <location>
        <begin position="187"/>
        <end position="190"/>
    </location>
</feature>
<feature type="turn" evidence="17">
    <location>
        <begin position="197"/>
        <end position="201"/>
    </location>
</feature>
<feature type="strand" evidence="15">
    <location>
        <begin position="205"/>
        <end position="207"/>
    </location>
</feature>
<feature type="helix" evidence="17">
    <location>
        <begin position="209"/>
        <end position="218"/>
    </location>
</feature>
<feature type="strand" evidence="17">
    <location>
        <begin position="223"/>
        <end position="228"/>
    </location>
</feature>
<feature type="helix" evidence="17">
    <location>
        <begin position="231"/>
        <end position="235"/>
    </location>
</feature>
<feature type="helix" evidence="17">
    <location>
        <begin position="237"/>
        <end position="242"/>
    </location>
</feature>
<feature type="strand" evidence="17">
    <location>
        <begin position="243"/>
        <end position="246"/>
    </location>
</feature>
<feature type="strand" evidence="9">
    <location>
        <begin position="248"/>
        <end position="250"/>
    </location>
</feature>
<feature type="strand" evidence="17">
    <location>
        <begin position="252"/>
        <end position="254"/>
    </location>
</feature>
<feature type="helix" evidence="17">
    <location>
        <begin position="255"/>
        <end position="260"/>
    </location>
</feature>
<feature type="strand" evidence="17">
    <location>
        <begin position="263"/>
        <end position="267"/>
    </location>
</feature>
<feature type="strand" evidence="17">
    <location>
        <begin position="270"/>
        <end position="273"/>
    </location>
</feature>
<feature type="strand" evidence="12">
    <location>
        <begin position="275"/>
        <end position="277"/>
    </location>
</feature>
<feature type="helix" evidence="17">
    <location>
        <begin position="279"/>
        <end position="293"/>
    </location>
</feature>
<feature type="strand" evidence="14">
    <location>
        <begin position="294"/>
        <end position="296"/>
    </location>
</feature>
<feature type="strand" evidence="17">
    <location>
        <begin position="298"/>
        <end position="300"/>
    </location>
</feature>
<feature type="strand" evidence="10">
    <location>
        <begin position="308"/>
        <end position="310"/>
    </location>
</feature>
<feature type="helix" evidence="17">
    <location>
        <begin position="312"/>
        <end position="314"/>
    </location>
</feature>
<feature type="strand" evidence="13">
    <location>
        <begin position="315"/>
        <end position="319"/>
    </location>
</feature>
<feature type="strand" evidence="17">
    <location>
        <begin position="323"/>
        <end position="328"/>
    </location>
</feature>
<feature type="helix" evidence="17">
    <location>
        <begin position="335"/>
        <end position="339"/>
    </location>
</feature>
<feature type="helix" evidence="17">
    <location>
        <begin position="341"/>
        <end position="349"/>
    </location>
</feature>
<feature type="turn" evidence="15">
    <location>
        <begin position="350"/>
        <end position="352"/>
    </location>
</feature>
<feature type="strand" evidence="14">
    <location>
        <begin position="354"/>
        <end position="357"/>
    </location>
</feature>
<feature type="turn" evidence="12">
    <location>
        <begin position="359"/>
        <end position="362"/>
    </location>
</feature>
<feature type="strand" evidence="16">
    <location>
        <begin position="363"/>
        <end position="369"/>
    </location>
</feature>
<feature type="helix" evidence="16">
    <location>
        <begin position="370"/>
        <end position="383"/>
    </location>
</feature>
<feature type="turn" evidence="16">
    <location>
        <begin position="384"/>
        <end position="386"/>
    </location>
</feature>
<feature type="strand" evidence="16">
    <location>
        <begin position="387"/>
        <end position="395"/>
    </location>
</feature>
<feature type="helix" evidence="16">
    <location>
        <begin position="396"/>
        <end position="405"/>
    </location>
</feature>
<feature type="strand" evidence="16">
    <location>
        <begin position="410"/>
        <end position="413"/>
    </location>
</feature>
<feature type="helix" evidence="16">
    <location>
        <begin position="415"/>
        <end position="423"/>
    </location>
</feature>
<feature type="strand" evidence="16">
    <location>
        <begin position="427"/>
        <end position="433"/>
    </location>
</feature>
<feature type="helix" evidence="16">
    <location>
        <begin position="437"/>
        <end position="439"/>
    </location>
</feature>
<feature type="strand" evidence="9">
    <location>
        <begin position="441"/>
        <end position="445"/>
    </location>
</feature>
<feature type="strand" evidence="16">
    <location>
        <begin position="450"/>
        <end position="460"/>
    </location>
</feature>
<feature type="helix" evidence="14">
    <location>
        <begin position="465"/>
        <end position="467"/>
    </location>
</feature>
<feature type="strand" evidence="16">
    <location>
        <begin position="470"/>
        <end position="475"/>
    </location>
</feature>
<feature type="turn" evidence="16">
    <location>
        <begin position="480"/>
        <end position="483"/>
    </location>
</feature>
<feature type="helix" evidence="16">
    <location>
        <begin position="484"/>
        <end position="494"/>
    </location>
</feature>
<feature type="helix" evidence="16">
    <location>
        <begin position="499"/>
        <end position="501"/>
    </location>
</feature>
<feature type="strand" evidence="16">
    <location>
        <begin position="503"/>
        <end position="507"/>
    </location>
</feature>
<feature type="strand" evidence="11">
    <location>
        <begin position="513"/>
        <end position="515"/>
    </location>
</feature>
<feature type="helix" evidence="16">
    <location>
        <begin position="516"/>
        <end position="518"/>
    </location>
</feature>
<feature type="strand" evidence="16">
    <location>
        <begin position="525"/>
        <end position="528"/>
    </location>
</feature>
<feature type="strand" evidence="15">
    <location>
        <begin position="534"/>
        <end position="540"/>
    </location>
</feature>
<feature type="helix" evidence="16">
    <location>
        <begin position="542"/>
        <end position="552"/>
    </location>
</feature>
<feature type="strand" evidence="16">
    <location>
        <begin position="555"/>
        <end position="560"/>
    </location>
</feature>
<feature type="helix" evidence="16">
    <location>
        <begin position="563"/>
        <end position="566"/>
    </location>
</feature>
<feature type="strand" evidence="12">
    <location>
        <begin position="568"/>
        <end position="571"/>
    </location>
</feature>
<feature type="turn" evidence="16">
    <location>
        <begin position="575"/>
        <end position="579"/>
    </location>
</feature>
<feature type="helix" evidence="16">
    <location>
        <begin position="582"/>
        <end position="584"/>
    </location>
</feature>
<feature type="strand" evidence="16">
    <location>
        <begin position="585"/>
        <end position="588"/>
    </location>
</feature>
<feature type="strand" evidence="14">
    <location>
        <begin position="590"/>
        <end position="592"/>
    </location>
</feature>
<feature type="strand" evidence="16">
    <location>
        <begin position="594"/>
        <end position="596"/>
    </location>
</feature>
<feature type="helix" evidence="16">
    <location>
        <begin position="597"/>
        <end position="602"/>
    </location>
</feature>
<feature type="strand" evidence="16">
    <location>
        <begin position="605"/>
        <end position="608"/>
    </location>
</feature>
<feature type="strand" evidence="16">
    <location>
        <begin position="612"/>
        <end position="615"/>
    </location>
</feature>
<feature type="helix" evidence="16">
    <location>
        <begin position="617"/>
        <end position="619"/>
    </location>
</feature>
<feature type="helix" evidence="16">
    <location>
        <begin position="620"/>
        <end position="634"/>
    </location>
</feature>
<feature type="turn" evidence="16">
    <location>
        <begin position="639"/>
        <end position="643"/>
    </location>
</feature>
<feature type="strand" evidence="16">
    <location>
        <begin position="650"/>
        <end position="652"/>
    </location>
</feature>
<feature type="strand" evidence="11">
    <location>
        <begin position="654"/>
        <end position="656"/>
    </location>
</feature>
<feature type="strand" evidence="16">
    <location>
        <begin position="662"/>
        <end position="665"/>
    </location>
</feature>
<feature type="helix" evidence="16">
    <location>
        <begin position="672"/>
        <end position="676"/>
    </location>
</feature>
<feature type="helix" evidence="16">
    <location>
        <begin position="678"/>
        <end position="687"/>
    </location>
</feature>
<feature type="turn" evidence="16">
    <location>
        <begin position="688"/>
        <end position="690"/>
    </location>
</feature>
<feature type="helix" evidence="16">
    <location>
        <begin position="694"/>
        <end position="703"/>
    </location>
</feature>
<reference key="1">
    <citation type="journal article" date="1982" name="Eur. J. Biochem.">
        <title>The complete nucleotide sequence of the chicken ovotransferrin mRNA.</title>
        <authorList>
            <person name="Jeltsch J.-M."/>
            <person name="Chambon P."/>
        </authorList>
    </citation>
    <scope>NUCLEOTIDE SEQUENCE [MRNA]</scope>
</reference>
<reference key="2">
    <citation type="journal article" date="1987" name="Nucleic Acids Res.">
        <title>Sequence of the chicken ovotransferrin gene.</title>
        <authorList>
            <person name="Jeltsch J.-M."/>
            <person name="Hen R."/>
            <person name="Maroteaux L."/>
            <person name="Garnier J.-M."/>
            <person name="Chambon P."/>
        </authorList>
    </citation>
    <scope>NUCLEOTIDE SEQUENCE [GENOMIC DNA]</scope>
</reference>
<reference key="3">
    <citation type="journal article" date="1978" name="J. Biol. Chem.">
        <title>Identical precursors for serum transferrin and egg white conalbumin.</title>
        <authorList>
            <person name="Thibodeau S.N."/>
            <person name="Lee D.C."/>
            <person name="Palmiter R.D."/>
        </authorList>
    </citation>
    <scope>PROTEIN SEQUENCE OF 1-19 (PRECURSOR PROTEIN)</scope>
    <source>
        <tissue>Egg white</tissue>
        <tissue>Serum</tissue>
    </source>
</reference>
<reference key="4">
    <citation type="journal article" date="1982" name="Eur. J. Biochem.">
        <title>The primary structure of hen ovotransferrin.</title>
        <authorList>
            <person name="Williams J."/>
            <person name="Elleman T.C."/>
            <person name="Kingston I.B."/>
            <person name="Wilkins A.G."/>
            <person name="Kuhn K.A."/>
        </authorList>
    </citation>
    <scope>PARTIAL PROTEIN SEQUENCE</scope>
</reference>
<reference key="5">
    <citation type="journal article" date="2014" name="J. Agric. Food Chem.">
        <title>Differential abundance of egg white proteins in laying hens treated with corticosterone.</title>
        <authorList>
            <person name="Kim J."/>
            <person name="Choi Y.H."/>
        </authorList>
    </citation>
    <scope>PROTEIN SEQUENCE OF 140-155; 288-310; 405-434; 442-458; 479-494; 493-517; 539-549; 578-594 AND 657-666</scope>
    <scope>TISSUE SPECIFICITY</scope>
    <scope>INDUCTION</scope>
    <scope>IDENTIFICATION BY MASS SPECTROMETRY</scope>
    <source>
        <tissue evidence="7">Egg white</tissue>
    </source>
</reference>
<reference key="6">
    <citation type="journal article" date="1975" name="Biochem. J.">
        <title>The amino acid sequence of a carbohydrate-containing fragment of hen ovotransferrin.</title>
        <authorList>
            <person name="Kingston I.B."/>
            <person name="Williams J."/>
        </authorList>
    </citation>
    <scope>PROTEIN SEQUENCE OF 480-582</scope>
</reference>
<reference key="7">
    <citation type="journal article" date="1970" name="Biochem. J.">
        <title>The amino acid sequences of cysteic acid-containing peptides from performic acid-oxidized ovotransferrin.</title>
        <authorList>
            <person name="Elleman T.C."/>
            <person name="Williams J."/>
        </authorList>
    </citation>
    <scope>DISULFIDE BONDS</scope>
</reference>
<reference key="8">
    <citation type="journal article" date="1979" name="Eur. J. Biochem.">
        <title>Investigation by 360-MHz 1H-nuclear-magnetic-resonance spectroscopy and methylation analysis of the single glycan chain of chicken ovotransferrin.</title>
        <authorList>
            <person name="Dorland L."/>
            <person name="Haverkamp J."/>
            <person name="Vliegenthart J.F.G."/>
            <person name="Spik G."/>
            <person name="Fournet B."/>
            <person name="Montreuil J."/>
        </authorList>
    </citation>
    <scope>STRUCTURE OF CARBOHYDRATES</scope>
</reference>
<reference key="9">
    <citation type="journal article" date="1994" name="Glycobiology">
        <title>Change in glycosylation of chicken transferrin glycans biosynthesized during embryogenesis and primary culture of embryo hepatocytes.</title>
        <authorList>
            <person name="Jacquinot P.-M."/>
            <person name="Leger D."/>
            <person name="Wieruszeski J.-M."/>
            <person name="Coddeville B."/>
            <person name="Montreuil J."/>
            <person name="Spik G."/>
        </authorList>
    </citation>
    <scope>STRUCTURE OF CARBOHYDRATES</scope>
</reference>
<reference key="10">
    <citation type="journal article" date="1993" name="Biochemistry">
        <title>Structural evidence for a pH-sensitive dilysine trigger in the hen ovotransferrin N-lobe: implications for transferrin iron release.</title>
        <authorList>
            <person name="Dewan J.C."/>
            <person name="Mikami B."/>
            <person name="Hirose M."/>
            <person name="Sacchettini J.C."/>
        </authorList>
    </citation>
    <scope>X-RAY CRYSTALLOGRAPHY (2.3 ANGSTROMS) OF 24-351</scope>
</reference>
<reference key="11">
    <citation type="journal article" date="1995" name="J. Mol. Biol.">
        <title>Crystal structure of diferric hen ovotransferrin at 2.4-A resolution.</title>
        <authorList>
            <person name="Kurokawa H."/>
            <person name="Mikami B."/>
            <person name="Hirose M."/>
        </authorList>
    </citation>
    <scope>X-RAY CRYSTALLOGRAPHY (2.4 ANGSTROMS)</scope>
    <scope>METAL- AND CARBONATE-BINDING SITES</scope>
</reference>
<reference key="12">
    <citation type="journal article" date="1999" name="J. Biol. Chem.">
        <title>Crystal structure of hen apo-ovotransferrin. Both lobes adopt an open conformation upon loss of iron.</title>
        <authorList>
            <person name="Kurokawa H."/>
            <person name="Dewan J.C."/>
            <person name="Mikami B."/>
            <person name="Sacchettini J.C."/>
            <person name="Hirose M."/>
        </authorList>
    </citation>
    <scope>X-RAY CRYSTALLOGRAPHY (3.0 ANGSTROMS)</scope>
</reference>
<keyword id="KW-0002">3D-structure</keyword>
<keyword id="KW-0020">Allergen</keyword>
<keyword id="KW-0903">Direct protein sequencing</keyword>
<keyword id="KW-1015">Disulfide bond</keyword>
<keyword id="KW-0325">Glycoprotein</keyword>
<keyword id="KW-0406">Ion transport</keyword>
<keyword id="KW-0408">Iron</keyword>
<keyword id="KW-0410">Iron transport</keyword>
<keyword id="KW-0479">Metal-binding</keyword>
<keyword id="KW-1185">Reference proteome</keyword>
<keyword id="KW-0677">Repeat</keyword>
<keyword id="KW-0964">Secreted</keyword>
<keyword id="KW-0732">Signal</keyword>
<keyword id="KW-0813">Transport</keyword>
<name>TRFE_CHICK</name>
<sequence length="705" mass="77777">MKLILCTVLSLGIAAVCFAAPPKSVIRWCTISSPEEKKCNNLRDLTQQERISLTCVQKATYLDCIKAIANNEADAISLDGGQAFEAGLAPYKLKPIAAEVYEHTEGSTTSYYAVAVVKKGTEFTVNDLQGKTSCHTGLGRSAGWNIPIGTLLHRGAIEWEGIESGSVEQAVAKFFSASCVPGATIEQKLCRQCKGDPKTKCARNAPYSGYSGAFHCLKDGKGDVAFVKHTTVNENAPDQKDEYELLCLDGSRQPVDNYKTCNWARVAAHAVVARDDNKVEDIWSFLSKAQSDFGVDTKSDFHLFGPPGKKDPVLKDLLFKDSAIMLKRVPSLMDSQLYLGFEYYSAIQSMRKDQLTPSPRENRIQWCAVGKDEKSKCDRWSVVSNGDVECTVVDETKDCIIKIMKGEADAVALDGGLVYTAGVCGLVPVMAERYDDESQCSKTDERPASYFAVAVARKDSNVNWNNLKGKKSCHTAVGRTAGWVIPMGLIHNRTGTCNFDEYFSEGCAPGSPPNSRLCQLCQGSGGIPPEKCVASSHEKYFGYTGALRCLVEKGDVAFIQHSTVEENTGGKNKADWAKNLQMDDFELLCTDGRRANVMDYRECNLAEVPTHAVVVRPEKANKIRDLLERQEKRFGVNGSEKSKFMMFESQNKDLLFKDLTKCLFKVREGTTYKEFLGDKFYTVISSLKTCNPSDILQMCSFLEGK</sequence>
<protein>
    <recommendedName>
        <fullName>Ovotransferrin</fullName>
    </recommendedName>
    <alternativeName>
        <fullName>Allergen Gal d III</fullName>
    </alternativeName>
    <alternativeName>
        <fullName>Conalbumin</fullName>
    </alternativeName>
    <alternativeName>
        <fullName>Serum transferrin</fullName>
    </alternativeName>
    <allergenName>Gal d 3</allergenName>
</protein>
<accession>P02789</accession>